<comment type="function">
    <text evidence="1">Phosphorolytic 3'-5' exoribonuclease that plays an important role in tRNA 3'-end maturation. Removes nucleotide residues following the 3'-CCA terminus of tRNAs; can also add nucleotides to the ends of RNA molecules by using nucleoside diphosphates as substrates, but this may not be physiologically important. Probably plays a role in initiation of 16S rRNA degradation (leading to ribosome degradation) during starvation.</text>
</comment>
<comment type="catalytic activity">
    <reaction evidence="1">
        <text>tRNA(n+1) + phosphate = tRNA(n) + a ribonucleoside 5'-diphosphate</text>
        <dbReference type="Rhea" id="RHEA:10628"/>
        <dbReference type="Rhea" id="RHEA-COMP:17343"/>
        <dbReference type="Rhea" id="RHEA-COMP:17344"/>
        <dbReference type="ChEBI" id="CHEBI:43474"/>
        <dbReference type="ChEBI" id="CHEBI:57930"/>
        <dbReference type="ChEBI" id="CHEBI:173114"/>
        <dbReference type="EC" id="2.7.7.56"/>
    </reaction>
</comment>
<comment type="subunit">
    <text evidence="1">Homohexameric ring arranged as a trimer of dimers.</text>
</comment>
<comment type="similarity">
    <text evidence="1">Belongs to the RNase PH family.</text>
</comment>
<gene>
    <name evidence="1" type="primary">rph</name>
    <name type="ordered locus">RBE_0607</name>
</gene>
<accession>Q1RIX6</accession>
<proteinExistence type="inferred from homology"/>
<protein>
    <recommendedName>
        <fullName evidence="1">Ribonuclease PH</fullName>
        <shortName evidence="1">RNase PH</shortName>
        <ecNumber evidence="1">2.7.7.56</ecNumber>
    </recommendedName>
    <alternativeName>
        <fullName evidence="1">tRNA nucleotidyltransferase</fullName>
    </alternativeName>
</protein>
<organism>
    <name type="scientific">Rickettsia bellii (strain RML369-C)</name>
    <dbReference type="NCBI Taxonomy" id="336407"/>
    <lineage>
        <taxon>Bacteria</taxon>
        <taxon>Pseudomonadati</taxon>
        <taxon>Pseudomonadota</taxon>
        <taxon>Alphaproteobacteria</taxon>
        <taxon>Rickettsiales</taxon>
        <taxon>Rickettsiaceae</taxon>
        <taxon>Rickettsieae</taxon>
        <taxon>Rickettsia</taxon>
        <taxon>belli group</taxon>
    </lineage>
</organism>
<evidence type="ECO:0000255" key="1">
    <source>
        <dbReference type="HAMAP-Rule" id="MF_00564"/>
    </source>
</evidence>
<keyword id="KW-0548">Nucleotidyltransferase</keyword>
<keyword id="KW-0694">RNA-binding</keyword>
<keyword id="KW-0698">rRNA processing</keyword>
<keyword id="KW-0808">Transferase</keyword>
<keyword id="KW-0819">tRNA processing</keyword>
<keyword id="KW-0820">tRNA-binding</keyword>
<reference key="1">
    <citation type="journal article" date="2006" name="PLoS Genet.">
        <title>Genome sequence of Rickettsia bellii illuminates the role of amoebae in gene exchanges between intracellular pathogens.</title>
        <authorList>
            <person name="Ogata H."/>
            <person name="La Scola B."/>
            <person name="Audic S."/>
            <person name="Renesto P."/>
            <person name="Blanc G."/>
            <person name="Robert C."/>
            <person name="Fournier P.-E."/>
            <person name="Claverie J.-M."/>
            <person name="Raoult D."/>
        </authorList>
    </citation>
    <scope>NUCLEOTIDE SEQUENCE [LARGE SCALE GENOMIC DNA]</scope>
    <source>
        <strain>RML369-C</strain>
    </source>
</reference>
<name>RNPH_RICBR</name>
<sequence length="239" mass="26479">MRQSGRKSNQLRPISLELSPLINAEGSCLIKIGNTHVMCSASYDTTVPPFLRNQNRGWITAEYSMLPGSTSQRNKREAVQGKQSGRTQEIQRLIGRTMRSIIDLQKLGERQITIDCDVINADGGTRTAAITGSYVALHLAIRSLMKKRILKVNPLINQVAAVSCGIYKDQPILDLDYLEDSDAEVDSNFVFAGNGNLIEIQGTAEKKPFSEEQFLEMLKLAKAGVAELFKLQNQVLLNL</sequence>
<dbReference type="EC" id="2.7.7.56" evidence="1"/>
<dbReference type="EMBL" id="CP000087">
    <property type="protein sequence ID" value="ABE04688.1"/>
    <property type="molecule type" value="Genomic_DNA"/>
</dbReference>
<dbReference type="RefSeq" id="WP_011477276.1">
    <property type="nucleotide sequence ID" value="NC_007940.1"/>
</dbReference>
<dbReference type="SMR" id="Q1RIX6"/>
<dbReference type="KEGG" id="rbe:RBE_0607"/>
<dbReference type="eggNOG" id="COG0689">
    <property type="taxonomic scope" value="Bacteria"/>
</dbReference>
<dbReference type="HOGENOM" id="CLU_050858_0_0_5"/>
<dbReference type="OrthoDB" id="9802265at2"/>
<dbReference type="Proteomes" id="UP000001951">
    <property type="component" value="Chromosome"/>
</dbReference>
<dbReference type="GO" id="GO:0000175">
    <property type="term" value="F:3'-5'-RNA exonuclease activity"/>
    <property type="evidence" value="ECO:0007669"/>
    <property type="project" value="UniProtKB-UniRule"/>
</dbReference>
<dbReference type="GO" id="GO:0000049">
    <property type="term" value="F:tRNA binding"/>
    <property type="evidence" value="ECO:0007669"/>
    <property type="project" value="UniProtKB-UniRule"/>
</dbReference>
<dbReference type="GO" id="GO:0009022">
    <property type="term" value="F:tRNA nucleotidyltransferase activity"/>
    <property type="evidence" value="ECO:0007669"/>
    <property type="project" value="UniProtKB-UniRule"/>
</dbReference>
<dbReference type="GO" id="GO:0016075">
    <property type="term" value="P:rRNA catabolic process"/>
    <property type="evidence" value="ECO:0007669"/>
    <property type="project" value="UniProtKB-UniRule"/>
</dbReference>
<dbReference type="GO" id="GO:0006364">
    <property type="term" value="P:rRNA processing"/>
    <property type="evidence" value="ECO:0007669"/>
    <property type="project" value="UniProtKB-KW"/>
</dbReference>
<dbReference type="GO" id="GO:0008033">
    <property type="term" value="P:tRNA processing"/>
    <property type="evidence" value="ECO:0007669"/>
    <property type="project" value="UniProtKB-UniRule"/>
</dbReference>
<dbReference type="CDD" id="cd11362">
    <property type="entry name" value="RNase_PH_bact"/>
    <property type="match status" value="1"/>
</dbReference>
<dbReference type="FunFam" id="3.30.230.70:FF:000003">
    <property type="entry name" value="Ribonuclease PH"/>
    <property type="match status" value="1"/>
</dbReference>
<dbReference type="Gene3D" id="3.30.230.70">
    <property type="entry name" value="GHMP Kinase, N-terminal domain"/>
    <property type="match status" value="1"/>
</dbReference>
<dbReference type="HAMAP" id="MF_00564">
    <property type="entry name" value="RNase_PH"/>
    <property type="match status" value="1"/>
</dbReference>
<dbReference type="InterPro" id="IPR001247">
    <property type="entry name" value="ExoRNase_PH_dom1"/>
</dbReference>
<dbReference type="InterPro" id="IPR015847">
    <property type="entry name" value="ExoRNase_PH_dom2"/>
</dbReference>
<dbReference type="InterPro" id="IPR036345">
    <property type="entry name" value="ExoRNase_PH_dom2_sf"/>
</dbReference>
<dbReference type="InterPro" id="IPR027408">
    <property type="entry name" value="PNPase/RNase_PH_dom_sf"/>
</dbReference>
<dbReference type="InterPro" id="IPR020568">
    <property type="entry name" value="Ribosomal_Su5_D2-typ_SF"/>
</dbReference>
<dbReference type="InterPro" id="IPR050080">
    <property type="entry name" value="RNase_PH"/>
</dbReference>
<dbReference type="InterPro" id="IPR002381">
    <property type="entry name" value="RNase_PH_bac-type"/>
</dbReference>
<dbReference type="InterPro" id="IPR018336">
    <property type="entry name" value="RNase_PH_CS"/>
</dbReference>
<dbReference type="NCBIfam" id="TIGR01966">
    <property type="entry name" value="RNasePH"/>
    <property type="match status" value="1"/>
</dbReference>
<dbReference type="PANTHER" id="PTHR11953">
    <property type="entry name" value="EXOSOME COMPLEX COMPONENT"/>
    <property type="match status" value="1"/>
</dbReference>
<dbReference type="PANTHER" id="PTHR11953:SF0">
    <property type="entry name" value="EXOSOME COMPLEX COMPONENT RRP41"/>
    <property type="match status" value="1"/>
</dbReference>
<dbReference type="Pfam" id="PF01138">
    <property type="entry name" value="RNase_PH"/>
    <property type="match status" value="1"/>
</dbReference>
<dbReference type="Pfam" id="PF03725">
    <property type="entry name" value="RNase_PH_C"/>
    <property type="match status" value="1"/>
</dbReference>
<dbReference type="SUPFAM" id="SSF55666">
    <property type="entry name" value="Ribonuclease PH domain 2-like"/>
    <property type="match status" value="1"/>
</dbReference>
<dbReference type="SUPFAM" id="SSF54211">
    <property type="entry name" value="Ribosomal protein S5 domain 2-like"/>
    <property type="match status" value="1"/>
</dbReference>
<dbReference type="PROSITE" id="PS01277">
    <property type="entry name" value="RIBONUCLEASE_PH"/>
    <property type="match status" value="1"/>
</dbReference>
<feature type="chain" id="PRO_0000277944" description="Ribonuclease PH">
    <location>
        <begin position="1"/>
        <end position="239"/>
    </location>
</feature>
<feature type="binding site" evidence="1">
    <location>
        <position position="86"/>
    </location>
    <ligand>
        <name>phosphate</name>
        <dbReference type="ChEBI" id="CHEBI:43474"/>
        <note>substrate</note>
    </ligand>
</feature>
<feature type="binding site" evidence="1">
    <location>
        <begin position="124"/>
        <end position="126"/>
    </location>
    <ligand>
        <name>phosphate</name>
        <dbReference type="ChEBI" id="CHEBI:43474"/>
        <note>substrate</note>
    </ligand>
</feature>